<gene>
    <name evidence="1" type="primary">rpmH</name>
    <name type="ordered locus">Dtur_0122</name>
</gene>
<proteinExistence type="inferred from homology"/>
<reference key="1">
    <citation type="journal article" date="2016" name="Front. Microbiol.">
        <title>The complete genome sequence of hyperthermophile Dictyoglomus turgidum DSM 6724 reveals a specialized carbohydrate fermentor.</title>
        <authorList>
            <person name="Brumm P.J."/>
            <person name="Gowda K."/>
            <person name="Robb F.T."/>
            <person name="Mead D.A."/>
        </authorList>
    </citation>
    <scope>NUCLEOTIDE SEQUENCE [LARGE SCALE GENOMIC DNA]</scope>
    <source>
        <strain>DSM 6724 / Z-1310</strain>
    </source>
</reference>
<sequence length="44" mass="5407">MKRTYQPKKHHRKRVHGFLARMRTPGGRRVIKRRRAKGRKRLTV</sequence>
<dbReference type="EMBL" id="CP001251">
    <property type="protein sequence ID" value="ACK41454.1"/>
    <property type="molecule type" value="Genomic_DNA"/>
</dbReference>
<dbReference type="RefSeq" id="WP_012547104.1">
    <property type="nucleotide sequence ID" value="NC_011661.1"/>
</dbReference>
<dbReference type="RefSeq" id="YP_002352068.1">
    <property type="nucleotide sequence ID" value="NC_011661.1"/>
</dbReference>
<dbReference type="SMR" id="B8DYS2"/>
<dbReference type="FunCoup" id="B8DYS2">
    <property type="interactions" value="229"/>
</dbReference>
<dbReference type="STRING" id="515635.Dtur_0122"/>
<dbReference type="EnsemblBacteria" id="ACK41454">
    <property type="protein sequence ID" value="ACK41454"/>
    <property type="gene ID" value="Dtur_0122"/>
</dbReference>
<dbReference type="KEGG" id="dtu:Dtur_0122"/>
<dbReference type="PATRIC" id="fig|515635.4.peg.128"/>
<dbReference type="eggNOG" id="COG0230">
    <property type="taxonomic scope" value="Bacteria"/>
</dbReference>
<dbReference type="HOGENOM" id="CLU_129938_2_0_0"/>
<dbReference type="InParanoid" id="B8DYS2"/>
<dbReference type="Proteomes" id="UP000007719">
    <property type="component" value="Chromosome"/>
</dbReference>
<dbReference type="GO" id="GO:1990904">
    <property type="term" value="C:ribonucleoprotein complex"/>
    <property type="evidence" value="ECO:0007669"/>
    <property type="project" value="UniProtKB-KW"/>
</dbReference>
<dbReference type="GO" id="GO:0005840">
    <property type="term" value="C:ribosome"/>
    <property type="evidence" value="ECO:0007669"/>
    <property type="project" value="UniProtKB-KW"/>
</dbReference>
<dbReference type="GO" id="GO:0003735">
    <property type="term" value="F:structural constituent of ribosome"/>
    <property type="evidence" value="ECO:0007669"/>
    <property type="project" value="InterPro"/>
</dbReference>
<dbReference type="GO" id="GO:0006412">
    <property type="term" value="P:translation"/>
    <property type="evidence" value="ECO:0007669"/>
    <property type="project" value="UniProtKB-UniRule"/>
</dbReference>
<dbReference type="FunFam" id="1.10.287.3980:FF:000001">
    <property type="entry name" value="Mitochondrial ribosomal protein L34"/>
    <property type="match status" value="1"/>
</dbReference>
<dbReference type="Gene3D" id="1.10.287.3980">
    <property type="match status" value="1"/>
</dbReference>
<dbReference type="HAMAP" id="MF_00391">
    <property type="entry name" value="Ribosomal_bL34"/>
    <property type="match status" value="1"/>
</dbReference>
<dbReference type="InterPro" id="IPR000271">
    <property type="entry name" value="Ribosomal_bL34"/>
</dbReference>
<dbReference type="InterPro" id="IPR020939">
    <property type="entry name" value="Ribosomal_bL34_CS"/>
</dbReference>
<dbReference type="NCBIfam" id="TIGR01030">
    <property type="entry name" value="rpmH_bact"/>
    <property type="match status" value="1"/>
</dbReference>
<dbReference type="PANTHER" id="PTHR14503:SF4">
    <property type="entry name" value="LARGE RIBOSOMAL SUBUNIT PROTEIN BL34M"/>
    <property type="match status" value="1"/>
</dbReference>
<dbReference type="PANTHER" id="PTHR14503">
    <property type="entry name" value="MITOCHONDRIAL RIBOSOMAL PROTEIN 34 FAMILY MEMBER"/>
    <property type="match status" value="1"/>
</dbReference>
<dbReference type="Pfam" id="PF00468">
    <property type="entry name" value="Ribosomal_L34"/>
    <property type="match status" value="1"/>
</dbReference>
<dbReference type="PROSITE" id="PS00784">
    <property type="entry name" value="RIBOSOMAL_L34"/>
    <property type="match status" value="1"/>
</dbReference>
<organism>
    <name type="scientific">Dictyoglomus turgidum (strain DSM 6724 / Z-1310)</name>
    <dbReference type="NCBI Taxonomy" id="515635"/>
    <lineage>
        <taxon>Bacteria</taxon>
        <taxon>Pseudomonadati</taxon>
        <taxon>Dictyoglomota</taxon>
        <taxon>Dictyoglomia</taxon>
        <taxon>Dictyoglomales</taxon>
        <taxon>Dictyoglomaceae</taxon>
        <taxon>Dictyoglomus</taxon>
    </lineage>
</organism>
<evidence type="ECO:0000255" key="1">
    <source>
        <dbReference type="HAMAP-Rule" id="MF_00391"/>
    </source>
</evidence>
<evidence type="ECO:0000305" key="2"/>
<protein>
    <recommendedName>
        <fullName evidence="1">Large ribosomal subunit protein bL34</fullName>
    </recommendedName>
    <alternativeName>
        <fullName evidence="2">50S ribosomal protein L34</fullName>
    </alternativeName>
</protein>
<accession>B8DYS2</accession>
<comment type="similarity">
    <text evidence="1">Belongs to the bacterial ribosomal protein bL34 family.</text>
</comment>
<name>RL34_DICTD</name>
<feature type="chain" id="PRO_1000196039" description="Large ribosomal subunit protein bL34">
    <location>
        <begin position="1"/>
        <end position="44"/>
    </location>
</feature>
<keyword id="KW-1185">Reference proteome</keyword>
<keyword id="KW-0687">Ribonucleoprotein</keyword>
<keyword id="KW-0689">Ribosomal protein</keyword>